<gene>
    <name evidence="4 8" type="primary">MsrA</name>
    <name evidence="4" type="synonym">Eip28/29</name>
    <name evidence="8" type="synonym">Eip71CD</name>
    <name evidence="8" type="ORF">CG7266</name>
</gene>
<protein>
    <recommendedName>
        <fullName>Peptide methionine sulfoxide reductase</fullName>
        <ecNumber evidence="1 3">1.8.4.11</ecNumber>
    </recommendedName>
    <alternativeName>
        <fullName>Ecdysone-induced protein 28/29 kDa</fullName>
    </alternativeName>
    <alternativeName>
        <fullName>Methionine-S-sulfoxide reductase</fullName>
    </alternativeName>
    <alternativeName>
        <fullName>Peptide-methionine (S)-S-oxide reductase</fullName>
    </alternativeName>
</protein>
<accession>P08761</accession>
<accession>Q86NL3</accession>
<accession>Q8IQM6</accession>
<accession>Q8IT52</accession>
<accession>Q9VUP3</accession>
<accession>Q9VUP4</accession>
<accession>Q9VUP5</accession>
<reference key="1">
    <citation type="journal article" date="1986" name="J. Mol. Biol.">
        <title>Structure of the Eip28/29 gene, an ecdysone-inducible gene from Drosophila.</title>
        <authorList>
            <person name="Cherbas L."/>
            <person name="Schulz R.A."/>
            <person name="Koehler M.M.D."/>
            <person name="Savakis C."/>
            <person name="Cherbas P."/>
        </authorList>
    </citation>
    <scope>NUCLEOTIDE SEQUENCE [GENOMIC DNA / MRNA] (ISOFORMS EIP28 AND EIP29)</scope>
    <source>
        <strain>Canton-S</strain>
    </source>
</reference>
<reference key="2">
    <citation type="journal article" date="2002" name="J. Biol. Chem.">
        <title>Reaction mechanism, evolutionary analysis, and role of zinc in Drosophila methionine-R-sulfoxide reductase.</title>
        <authorList>
            <person name="Kumar R.A."/>
            <person name="Koc A."/>
            <person name="Cerny R.L."/>
            <person name="Gladyshev V.N."/>
        </authorList>
    </citation>
    <scope>NUCLEOTIDE SEQUENCE [MRNA] (ISOFORM EIP28)</scope>
    <scope>FUNCTION</scope>
    <scope>CATALYTIC ACTIVITY</scope>
</reference>
<reference key="3">
    <citation type="journal article" date="2000" name="Science">
        <title>The genome sequence of Drosophila melanogaster.</title>
        <authorList>
            <person name="Adams M.D."/>
            <person name="Celniker S.E."/>
            <person name="Holt R.A."/>
            <person name="Evans C.A."/>
            <person name="Gocayne J.D."/>
            <person name="Amanatides P.G."/>
            <person name="Scherer S.E."/>
            <person name="Li P.W."/>
            <person name="Hoskins R.A."/>
            <person name="Galle R.F."/>
            <person name="George R.A."/>
            <person name="Lewis S.E."/>
            <person name="Richards S."/>
            <person name="Ashburner M."/>
            <person name="Henderson S.N."/>
            <person name="Sutton G.G."/>
            <person name="Wortman J.R."/>
            <person name="Yandell M.D."/>
            <person name="Zhang Q."/>
            <person name="Chen L.X."/>
            <person name="Brandon R.C."/>
            <person name="Rogers Y.-H.C."/>
            <person name="Blazej R.G."/>
            <person name="Champe M."/>
            <person name="Pfeiffer B.D."/>
            <person name="Wan K.H."/>
            <person name="Doyle C."/>
            <person name="Baxter E.G."/>
            <person name="Helt G."/>
            <person name="Nelson C.R."/>
            <person name="Miklos G.L.G."/>
            <person name="Abril J.F."/>
            <person name="Agbayani A."/>
            <person name="An H.-J."/>
            <person name="Andrews-Pfannkoch C."/>
            <person name="Baldwin D."/>
            <person name="Ballew R.M."/>
            <person name="Basu A."/>
            <person name="Baxendale J."/>
            <person name="Bayraktaroglu L."/>
            <person name="Beasley E.M."/>
            <person name="Beeson K.Y."/>
            <person name="Benos P.V."/>
            <person name="Berman B.P."/>
            <person name="Bhandari D."/>
            <person name="Bolshakov S."/>
            <person name="Borkova D."/>
            <person name="Botchan M.R."/>
            <person name="Bouck J."/>
            <person name="Brokstein P."/>
            <person name="Brottier P."/>
            <person name="Burtis K.C."/>
            <person name="Busam D.A."/>
            <person name="Butler H."/>
            <person name="Cadieu E."/>
            <person name="Center A."/>
            <person name="Chandra I."/>
            <person name="Cherry J.M."/>
            <person name="Cawley S."/>
            <person name="Dahlke C."/>
            <person name="Davenport L.B."/>
            <person name="Davies P."/>
            <person name="de Pablos B."/>
            <person name="Delcher A."/>
            <person name="Deng Z."/>
            <person name="Mays A.D."/>
            <person name="Dew I."/>
            <person name="Dietz S.M."/>
            <person name="Dodson K."/>
            <person name="Doup L.E."/>
            <person name="Downes M."/>
            <person name="Dugan-Rocha S."/>
            <person name="Dunkov B.C."/>
            <person name="Dunn P."/>
            <person name="Durbin K.J."/>
            <person name="Evangelista C.C."/>
            <person name="Ferraz C."/>
            <person name="Ferriera S."/>
            <person name="Fleischmann W."/>
            <person name="Fosler C."/>
            <person name="Gabrielian A.E."/>
            <person name="Garg N.S."/>
            <person name="Gelbart W.M."/>
            <person name="Glasser K."/>
            <person name="Glodek A."/>
            <person name="Gong F."/>
            <person name="Gorrell J.H."/>
            <person name="Gu Z."/>
            <person name="Guan P."/>
            <person name="Harris M."/>
            <person name="Harris N.L."/>
            <person name="Harvey D.A."/>
            <person name="Heiman T.J."/>
            <person name="Hernandez J.R."/>
            <person name="Houck J."/>
            <person name="Hostin D."/>
            <person name="Houston K.A."/>
            <person name="Howland T.J."/>
            <person name="Wei M.-H."/>
            <person name="Ibegwam C."/>
            <person name="Jalali M."/>
            <person name="Kalush F."/>
            <person name="Karpen G.H."/>
            <person name="Ke Z."/>
            <person name="Kennison J.A."/>
            <person name="Ketchum K.A."/>
            <person name="Kimmel B.E."/>
            <person name="Kodira C.D."/>
            <person name="Kraft C.L."/>
            <person name="Kravitz S."/>
            <person name="Kulp D."/>
            <person name="Lai Z."/>
            <person name="Lasko P."/>
            <person name="Lei Y."/>
            <person name="Levitsky A.A."/>
            <person name="Li J.H."/>
            <person name="Li Z."/>
            <person name="Liang Y."/>
            <person name="Lin X."/>
            <person name="Liu X."/>
            <person name="Mattei B."/>
            <person name="McIntosh T.C."/>
            <person name="McLeod M.P."/>
            <person name="McPherson D."/>
            <person name="Merkulov G."/>
            <person name="Milshina N.V."/>
            <person name="Mobarry C."/>
            <person name="Morris J."/>
            <person name="Moshrefi A."/>
            <person name="Mount S.M."/>
            <person name="Moy M."/>
            <person name="Murphy B."/>
            <person name="Murphy L."/>
            <person name="Muzny D.M."/>
            <person name="Nelson D.L."/>
            <person name="Nelson D.R."/>
            <person name="Nelson K.A."/>
            <person name="Nixon K."/>
            <person name="Nusskern D.R."/>
            <person name="Pacleb J.M."/>
            <person name="Palazzolo M."/>
            <person name="Pittman G.S."/>
            <person name="Pan S."/>
            <person name="Pollard J."/>
            <person name="Puri V."/>
            <person name="Reese M.G."/>
            <person name="Reinert K."/>
            <person name="Remington K."/>
            <person name="Saunders R.D.C."/>
            <person name="Scheeler F."/>
            <person name="Shen H."/>
            <person name="Shue B.C."/>
            <person name="Siden-Kiamos I."/>
            <person name="Simpson M."/>
            <person name="Skupski M.P."/>
            <person name="Smith T.J."/>
            <person name="Spier E."/>
            <person name="Spradling A.C."/>
            <person name="Stapleton M."/>
            <person name="Strong R."/>
            <person name="Sun E."/>
            <person name="Svirskas R."/>
            <person name="Tector C."/>
            <person name="Turner R."/>
            <person name="Venter E."/>
            <person name="Wang A.H."/>
            <person name="Wang X."/>
            <person name="Wang Z.-Y."/>
            <person name="Wassarman D.A."/>
            <person name="Weinstock G.M."/>
            <person name="Weissenbach J."/>
            <person name="Williams S.M."/>
            <person name="Woodage T."/>
            <person name="Worley K.C."/>
            <person name="Wu D."/>
            <person name="Yang S."/>
            <person name="Yao Q.A."/>
            <person name="Ye J."/>
            <person name="Yeh R.-F."/>
            <person name="Zaveri J.S."/>
            <person name="Zhan M."/>
            <person name="Zhang G."/>
            <person name="Zhao Q."/>
            <person name="Zheng L."/>
            <person name="Zheng X.H."/>
            <person name="Zhong F.N."/>
            <person name="Zhong W."/>
            <person name="Zhou X."/>
            <person name="Zhu S.C."/>
            <person name="Zhu X."/>
            <person name="Smith H.O."/>
            <person name="Gibbs R.A."/>
            <person name="Myers E.W."/>
            <person name="Rubin G.M."/>
            <person name="Venter J.C."/>
        </authorList>
    </citation>
    <scope>NUCLEOTIDE SEQUENCE [LARGE SCALE GENOMIC DNA]</scope>
    <source>
        <strain>Berkeley</strain>
    </source>
</reference>
<reference key="4">
    <citation type="journal article" date="2002" name="Genome Biol.">
        <title>Annotation of the Drosophila melanogaster euchromatic genome: a systematic review.</title>
        <authorList>
            <person name="Misra S."/>
            <person name="Crosby M.A."/>
            <person name="Mungall C.J."/>
            <person name="Matthews B.B."/>
            <person name="Campbell K.S."/>
            <person name="Hradecky P."/>
            <person name="Huang Y."/>
            <person name="Kaminker J.S."/>
            <person name="Millburn G.H."/>
            <person name="Prochnik S.E."/>
            <person name="Smith C.D."/>
            <person name="Tupy J.L."/>
            <person name="Whitfield E.J."/>
            <person name="Bayraktaroglu L."/>
            <person name="Berman B.P."/>
            <person name="Bettencourt B.R."/>
            <person name="Celniker S.E."/>
            <person name="de Grey A.D.N.J."/>
            <person name="Drysdale R.A."/>
            <person name="Harris N.L."/>
            <person name="Richter J."/>
            <person name="Russo S."/>
            <person name="Schroeder A.J."/>
            <person name="Shu S.Q."/>
            <person name="Stapleton M."/>
            <person name="Yamada C."/>
            <person name="Ashburner M."/>
            <person name="Gelbart W.M."/>
            <person name="Rubin G.M."/>
            <person name="Lewis S.E."/>
        </authorList>
    </citation>
    <scope>GENOME REANNOTATION</scope>
    <scope>ALTERNATIVE SPLICING</scope>
    <source>
        <strain>Berkeley</strain>
    </source>
</reference>
<reference key="5">
    <citation type="submission" date="2003-02" db="EMBL/GenBank/DDBJ databases">
        <authorList>
            <person name="Stapleton M."/>
            <person name="Brokstein P."/>
            <person name="Hong L."/>
            <person name="Agbayani A."/>
            <person name="Carlson J.W."/>
            <person name="Champe M."/>
            <person name="Chavez C."/>
            <person name="Dorsett V."/>
            <person name="Dresnek D."/>
            <person name="Farfan D."/>
            <person name="Frise E."/>
            <person name="George R.A."/>
            <person name="Gonzalez M."/>
            <person name="Guarin H."/>
            <person name="Kronmiller B."/>
            <person name="Li P.W."/>
            <person name="Liao G."/>
            <person name="Miranda A."/>
            <person name="Mungall C.J."/>
            <person name="Nunoo J."/>
            <person name="Pacleb J.M."/>
            <person name="Paragas V."/>
            <person name="Park S."/>
            <person name="Patel S."/>
            <person name="Phouanenavong S."/>
            <person name="Wan K.H."/>
            <person name="Yu C."/>
            <person name="Lewis S.E."/>
            <person name="Rubin G.M."/>
            <person name="Celniker S.E."/>
        </authorList>
    </citation>
    <scope>NUCLEOTIDE SEQUENCE [LARGE SCALE MRNA] (ISOFORM EIP29)</scope>
    <source>
        <strain>Berkeley</strain>
        <tissue>Embryo</tissue>
    </source>
</reference>
<reference key="6">
    <citation type="journal article" date="2017" name="PLoS ONE">
        <title>A proteomics approach to identify targets of the ubiquitin-like molecule Urm1 in Drosophila melanogaster.</title>
        <authorList>
            <person name="Khoshnood B."/>
            <person name="Dacklin I."/>
            <person name="Grabbe C."/>
        </authorList>
    </citation>
    <scope>URMYLATION</scope>
    <scope>IDENTIFICATION BY MASS SPECTROMETRY</scope>
</reference>
<reference key="7">
    <citation type="journal article" date="2019" name="Free Radic. Biol. Med.">
        <title>Drosophila methionine sulfoxide reductase A (MSRA) lacks methionine oxidase activity.</title>
        <authorList>
            <person name="Tarafdar S."/>
            <person name="Kim G."/>
            <person name="Levine R.L."/>
        </authorList>
    </citation>
    <scope>FUNCTION</scope>
    <scope>CATALYTIC ACTIVITY</scope>
    <scope>BIOPHYSICOCHEMICAL PROPERTIES</scope>
    <scope>MASS SPECTROMETRY</scope>
    <scope>DISULFIDE BOND</scope>
    <scope>MUTAGENESIS OF CYS-232 AND CYS-246</scope>
</reference>
<feature type="initiator methionine" description="Removed" evidence="1 3">
    <location>
        <position position="1"/>
    </location>
</feature>
<feature type="chain" id="PRO_0000138629" description="Peptide methionine sulfoxide reductase">
    <location>
        <begin position="2"/>
        <end position="246"/>
    </location>
</feature>
<feature type="active site" description="Cysteine sulfenic acid (-SOH) intermediate" evidence="7">
    <location>
        <position position="48"/>
    </location>
</feature>
<feature type="disulfide bond" description="Redox-active" evidence="3">
    <location>
        <begin position="48"/>
        <end position="246"/>
    </location>
</feature>
<feature type="splice variant" id="VSP_003279" description="In isoform Eip29." evidence="4 5">
    <location>
        <begin position="79"/>
        <end position="82"/>
    </location>
</feature>
<feature type="mutagenesis site" description="No effect on methionine sulfoxide reductase activity and still lacks methionine oxidase activity; when associated with S-246." evidence="3">
    <original>C</original>
    <variation>S</variation>
    <location>
        <position position="232"/>
    </location>
</feature>
<feature type="mutagenesis site" description="No effect on methionine sulfoxide reductase activity and still lacks methionine oxidase activity; when associated with S-232." evidence="3">
    <original>C</original>
    <variation>S</variation>
    <location>
        <position position="246"/>
    </location>
</feature>
<feature type="sequence conflict" description="In Ref. 5; AAO45213." evidence="6" ref="5">
    <original>EA</original>
    <variation>V</variation>
    <location>
        <begin position="218"/>
        <end position="219"/>
    </location>
</feature>
<keyword id="KW-0025">Alternative splicing</keyword>
<keyword id="KW-1015">Disulfide bond</keyword>
<keyword id="KW-0560">Oxidoreductase</keyword>
<keyword id="KW-0676">Redox-active center</keyword>
<keyword id="KW-1185">Reference proteome</keyword>
<keyword id="KW-0832">Ubl conjugation</keyword>
<name>MSRA_DROME</name>
<sequence length="246" mass="27698">MSLTITSSVTHPELKDLSTVRNEQKELNISPVHDVNVTKATATFGMGCFWGAESLYGATRGVLRTTVGYAGGSSDLPTYRKMGDHTEVLEIDYDPTVISFKELLDLFWNNHEYGLTTPIKRQYASLILYHDEEQKQVAHASKLEEQERRAPEIITTEIASKENFYPAEAYHQKYRLQGHKDLASSLNLSPKLLQTSYVATKLNGYLAGVGGIEQFKAEAETMGLTPTQRQYCYYHVEQNEGQGLYC</sequence>
<dbReference type="EC" id="1.8.4.11" evidence="1 3"/>
<dbReference type="EMBL" id="X58286">
    <property type="protein sequence ID" value="CAA41223.1"/>
    <property type="status" value="ALT_FRAME"/>
    <property type="molecule type" value="Genomic_DNA"/>
</dbReference>
<dbReference type="EMBL" id="X04024">
    <property type="protein sequence ID" value="CAA27657.1"/>
    <property type="status" value="ALT_FRAME"/>
    <property type="molecule type" value="Genomic_DNA"/>
</dbReference>
<dbReference type="EMBL" id="X04024">
    <property type="protein sequence ID" value="CAA27658.1"/>
    <property type="status" value="ALT_FRAME"/>
    <property type="molecule type" value="Genomic_DNA"/>
</dbReference>
<dbReference type="EMBL" id="X04521">
    <property type="protein sequence ID" value="CAA28205.1"/>
    <property type="status" value="ALT_FRAME"/>
    <property type="molecule type" value="mRNA"/>
</dbReference>
<dbReference type="EMBL" id="AF541958">
    <property type="protein sequence ID" value="AAN28311.1"/>
    <property type="molecule type" value="mRNA"/>
</dbReference>
<dbReference type="EMBL" id="AE014296">
    <property type="protein sequence ID" value="AAF49630.2"/>
    <property type="molecule type" value="Genomic_DNA"/>
</dbReference>
<dbReference type="EMBL" id="AE014296">
    <property type="protein sequence ID" value="AAN11775.1"/>
    <property type="molecule type" value="Genomic_DNA"/>
</dbReference>
<dbReference type="EMBL" id="BT004857">
    <property type="protein sequence ID" value="AAO45213.1"/>
    <property type="molecule type" value="mRNA"/>
</dbReference>
<dbReference type="PIR" id="A24254">
    <property type="entry name" value="A24254"/>
</dbReference>
<dbReference type="RefSeq" id="NP_524085.2">
    <molecule id="P08761-1"/>
    <property type="nucleotide sequence ID" value="NM_079361.3"/>
</dbReference>
<dbReference type="RefSeq" id="NP_730047.1">
    <molecule id="P08761-2"/>
    <property type="nucleotide sequence ID" value="NM_168622.2"/>
</dbReference>
<dbReference type="SMR" id="P08761"/>
<dbReference type="BioGRID" id="64995">
    <property type="interactions" value="3"/>
</dbReference>
<dbReference type="FunCoup" id="P08761">
    <property type="interactions" value="922"/>
</dbReference>
<dbReference type="IntAct" id="P08761">
    <property type="interactions" value="2"/>
</dbReference>
<dbReference type="STRING" id="7227.FBpp0303210"/>
<dbReference type="PaxDb" id="7227-FBpp0075308"/>
<dbReference type="DNASU" id="39675"/>
<dbReference type="EnsemblMetazoa" id="FBtr0075553">
    <molecule id="P08761-1"/>
    <property type="protein sequence ID" value="FBpp0075308"/>
    <property type="gene ID" value="FBgn0000565"/>
</dbReference>
<dbReference type="EnsemblMetazoa" id="FBtr0075554">
    <molecule id="P08761-2"/>
    <property type="protein sequence ID" value="FBpp0075309"/>
    <property type="gene ID" value="FBgn0000565"/>
</dbReference>
<dbReference type="GeneID" id="39675"/>
<dbReference type="KEGG" id="dme:Dmel_CG7266"/>
<dbReference type="AGR" id="FB:FBgn0000565"/>
<dbReference type="CTD" id="4482"/>
<dbReference type="FlyBase" id="FBgn0000565">
    <property type="gene designation" value="MsrA"/>
</dbReference>
<dbReference type="VEuPathDB" id="VectorBase:FBgn0000565"/>
<dbReference type="eggNOG" id="KOG1635">
    <property type="taxonomic scope" value="Eukaryota"/>
</dbReference>
<dbReference type="GeneTree" id="ENSGT00940000171922"/>
<dbReference type="InParanoid" id="P08761"/>
<dbReference type="OMA" id="QCFWGAE"/>
<dbReference type="OrthoDB" id="77405at2759"/>
<dbReference type="PhylomeDB" id="P08761"/>
<dbReference type="BRENDA" id="1.8.4.11">
    <property type="organism ID" value="1994"/>
</dbReference>
<dbReference type="SABIO-RK" id="P08761"/>
<dbReference type="BioGRID-ORCS" id="39675">
    <property type="hits" value="0 hits in 1 CRISPR screen"/>
</dbReference>
<dbReference type="GenomeRNAi" id="39675"/>
<dbReference type="PRO" id="PR:P08761"/>
<dbReference type="Proteomes" id="UP000000803">
    <property type="component" value="Chromosome 3L"/>
</dbReference>
<dbReference type="Bgee" id="FBgn0000565">
    <property type="expression patterns" value="Expressed in adult class III enteroendocrine cell in adult midgut (Drosophila) and 219 other cell types or tissues"/>
</dbReference>
<dbReference type="ExpressionAtlas" id="P08761">
    <property type="expression patterns" value="baseline and differential"/>
</dbReference>
<dbReference type="GO" id="GO:0005737">
    <property type="term" value="C:cytoplasm"/>
    <property type="evidence" value="ECO:0000318"/>
    <property type="project" value="GO_Central"/>
</dbReference>
<dbReference type="GO" id="GO:0005739">
    <property type="term" value="C:mitochondrion"/>
    <property type="evidence" value="ECO:0000250"/>
    <property type="project" value="FlyBase"/>
</dbReference>
<dbReference type="GO" id="GO:0036456">
    <property type="term" value="F:L-methionine-(S)-S-oxide reductase activity"/>
    <property type="evidence" value="ECO:0000318"/>
    <property type="project" value="GO_Central"/>
</dbReference>
<dbReference type="GO" id="GO:0008113">
    <property type="term" value="F:peptide-methionine (S)-S-oxide reductase activity"/>
    <property type="evidence" value="ECO:0000314"/>
    <property type="project" value="FlyBase"/>
</dbReference>
<dbReference type="GO" id="GO:0034599">
    <property type="term" value="P:cellular response to oxidative stress"/>
    <property type="evidence" value="ECO:0000270"/>
    <property type="project" value="FlyBase"/>
</dbReference>
<dbReference type="GO" id="GO:0008340">
    <property type="term" value="P:determination of adult lifespan"/>
    <property type="evidence" value="ECO:0000315"/>
    <property type="project" value="FlyBase"/>
</dbReference>
<dbReference type="GO" id="GO:0006979">
    <property type="term" value="P:response to oxidative stress"/>
    <property type="evidence" value="ECO:0000315"/>
    <property type="project" value="FlyBase"/>
</dbReference>
<dbReference type="GO" id="GO:0000096">
    <property type="term" value="P:sulfur amino acid metabolic process"/>
    <property type="evidence" value="ECO:0000303"/>
    <property type="project" value="FlyBase"/>
</dbReference>
<dbReference type="FunFam" id="3.30.1060.10:FF:000004">
    <property type="entry name" value="Peptide methionine sulfoxide reductase A5"/>
    <property type="match status" value="1"/>
</dbReference>
<dbReference type="Gene3D" id="3.30.1060.10">
    <property type="entry name" value="Peptide methionine sulphoxide reductase MsrA"/>
    <property type="match status" value="1"/>
</dbReference>
<dbReference type="HAMAP" id="MF_01401">
    <property type="entry name" value="MsrA"/>
    <property type="match status" value="1"/>
</dbReference>
<dbReference type="InterPro" id="IPR002569">
    <property type="entry name" value="Met_Sox_Rdtase_MsrA_dom"/>
</dbReference>
<dbReference type="InterPro" id="IPR036509">
    <property type="entry name" value="Met_Sox_Rdtase_MsrA_sf"/>
</dbReference>
<dbReference type="NCBIfam" id="TIGR00401">
    <property type="entry name" value="msrA"/>
    <property type="match status" value="1"/>
</dbReference>
<dbReference type="PANTHER" id="PTHR43774">
    <property type="entry name" value="PEPTIDE METHIONINE SULFOXIDE REDUCTASE"/>
    <property type="match status" value="1"/>
</dbReference>
<dbReference type="PANTHER" id="PTHR43774:SF1">
    <property type="entry name" value="PEPTIDE METHIONINE SULFOXIDE REDUCTASE MSRA 2"/>
    <property type="match status" value="1"/>
</dbReference>
<dbReference type="Pfam" id="PF01625">
    <property type="entry name" value="PMSR"/>
    <property type="match status" value="1"/>
</dbReference>
<dbReference type="SUPFAM" id="SSF55068">
    <property type="entry name" value="Peptide methionine sulfoxide reductase"/>
    <property type="match status" value="1"/>
</dbReference>
<organism>
    <name type="scientific">Drosophila melanogaster</name>
    <name type="common">Fruit fly</name>
    <dbReference type="NCBI Taxonomy" id="7227"/>
    <lineage>
        <taxon>Eukaryota</taxon>
        <taxon>Metazoa</taxon>
        <taxon>Ecdysozoa</taxon>
        <taxon>Arthropoda</taxon>
        <taxon>Hexapoda</taxon>
        <taxon>Insecta</taxon>
        <taxon>Pterygota</taxon>
        <taxon>Neoptera</taxon>
        <taxon>Endopterygota</taxon>
        <taxon>Diptera</taxon>
        <taxon>Brachycera</taxon>
        <taxon>Muscomorpha</taxon>
        <taxon>Ephydroidea</taxon>
        <taxon>Drosophilidae</taxon>
        <taxon>Drosophila</taxon>
        <taxon>Sophophora</taxon>
    </lineage>
</organism>
<proteinExistence type="evidence at protein level"/>
<comment type="function">
    <text evidence="1 3">Has an important function as a repair enzyme for proteins that have been inactivated by oxidation. Catalyzes the reduction of methionine sulfoxide in proteins to methionine (PubMed:12145281, PubMed:30529269). Does not catalyze the reverse reaction involving the oxidation of methionine residues (PubMed:30529269).</text>
</comment>
<comment type="catalytic activity">
    <reaction evidence="1 3">
        <text>L-methionyl-[protein] + [thioredoxin]-disulfide + H2O = L-methionyl-(S)-S-oxide-[protein] + [thioredoxin]-dithiol</text>
        <dbReference type="Rhea" id="RHEA:14217"/>
        <dbReference type="Rhea" id="RHEA-COMP:10698"/>
        <dbReference type="Rhea" id="RHEA-COMP:10700"/>
        <dbReference type="Rhea" id="RHEA-COMP:12313"/>
        <dbReference type="Rhea" id="RHEA-COMP:12315"/>
        <dbReference type="ChEBI" id="CHEBI:15377"/>
        <dbReference type="ChEBI" id="CHEBI:16044"/>
        <dbReference type="ChEBI" id="CHEBI:29950"/>
        <dbReference type="ChEBI" id="CHEBI:44120"/>
        <dbReference type="ChEBI" id="CHEBI:50058"/>
        <dbReference type="EC" id="1.8.4.11"/>
    </reaction>
    <physiologicalReaction direction="right-to-left" evidence="3">
        <dbReference type="Rhea" id="RHEA:14219"/>
    </physiologicalReaction>
</comment>
<comment type="catalytic activity">
    <reaction evidence="1 3">
        <text>[thioredoxin]-disulfide + L-methionine + H2O = L-methionine (S)-S-oxide + [thioredoxin]-dithiol</text>
        <dbReference type="Rhea" id="RHEA:19993"/>
        <dbReference type="Rhea" id="RHEA-COMP:10698"/>
        <dbReference type="Rhea" id="RHEA-COMP:10700"/>
        <dbReference type="ChEBI" id="CHEBI:15377"/>
        <dbReference type="ChEBI" id="CHEBI:29950"/>
        <dbReference type="ChEBI" id="CHEBI:50058"/>
        <dbReference type="ChEBI" id="CHEBI:57844"/>
        <dbReference type="ChEBI" id="CHEBI:58772"/>
        <dbReference type="EC" id="1.8.4.11"/>
    </reaction>
    <physiologicalReaction direction="right-to-left" evidence="3">
        <dbReference type="Rhea" id="RHEA:19995"/>
    </physiologicalReaction>
</comment>
<comment type="biophysicochemical properties">
    <kinetics>
        <KM evidence="3">3.6 mM for L-methionine sulfoxide</KM>
        <Vmax evidence="3">0.15 umol/min/mg enzyme towards L-methionine sulfoxide (at 25 degrees Celsius)</Vmax>
    </kinetics>
</comment>
<comment type="alternative products">
    <event type="alternative splicing"/>
    <isoform>
        <id>P08761-1</id>
        <name>Eip28</name>
        <name>A</name>
        <sequence type="displayed"/>
    </isoform>
    <isoform>
        <id>P08761-2</id>
        <name>Eip29</name>
        <name>B</name>
        <sequence type="described" ref="VSP_003279"/>
    </isoform>
</comment>
<comment type="induction">
    <text>By ecdysone.</text>
</comment>
<comment type="PTM">
    <text evidence="2">Conjugated to URM1, a ubiquitin-like protein.</text>
</comment>
<comment type="mass spectrometry" mass="27567.4" method="Electrospray" evidence="3"/>
<comment type="similarity">
    <text evidence="6">Belongs to the MsrA Met sulfoxide reductase family.</text>
</comment>
<comment type="caution">
    <text evidence="3">Unlike mammalian MSRA, lacks methionine oxidase activity because Cys-232 cannot function as a resolving cysteine to perform the disulfide exchange and instead remains as a free thiol (PubMed:30529269). As a result, the active site cysteine is trapped in disulfide linkage with Cys-246 and is therefore unable to react with a second molecule of methionine sulfoxide to complete methionine oxidation (PubMed:30529269).</text>
</comment>
<comment type="sequence caution" evidence="6">
    <conflict type="frameshift">
        <sequence resource="EMBL-CDS" id="CAA28205"/>
    </conflict>
</comment>
<evidence type="ECO:0000269" key="1">
    <source>
    </source>
</evidence>
<evidence type="ECO:0000269" key="2">
    <source>
    </source>
</evidence>
<evidence type="ECO:0000269" key="3">
    <source>
    </source>
</evidence>
<evidence type="ECO:0000303" key="4">
    <source>
    </source>
</evidence>
<evidence type="ECO:0000303" key="5">
    <source ref="5"/>
</evidence>
<evidence type="ECO:0000305" key="6"/>
<evidence type="ECO:0000305" key="7">
    <source>
    </source>
</evidence>
<evidence type="ECO:0000312" key="8">
    <source>
        <dbReference type="FlyBase" id="FBgn0000565"/>
    </source>
</evidence>